<proteinExistence type="inferred from homology"/>
<accession>A1BJW3</accession>
<protein>
    <recommendedName>
        <fullName evidence="1">ATP synthase subunit delta</fullName>
    </recommendedName>
    <alternativeName>
        <fullName evidence="1">ATP synthase F(1) sector subunit delta</fullName>
    </alternativeName>
    <alternativeName>
        <fullName evidence="1">F-type ATPase subunit delta</fullName>
        <shortName evidence="1">F-ATPase subunit delta</shortName>
    </alternativeName>
</protein>
<organism>
    <name type="scientific">Chlorobium phaeobacteroides (strain DSM 266 / SMG 266 / 2430)</name>
    <dbReference type="NCBI Taxonomy" id="290317"/>
    <lineage>
        <taxon>Bacteria</taxon>
        <taxon>Pseudomonadati</taxon>
        <taxon>Chlorobiota</taxon>
        <taxon>Chlorobiia</taxon>
        <taxon>Chlorobiales</taxon>
        <taxon>Chlorobiaceae</taxon>
        <taxon>Chlorobium/Pelodictyon group</taxon>
        <taxon>Chlorobium</taxon>
    </lineage>
</organism>
<sequence>MSSVIASRRYASALLSAAEEGGFLDQATQELAQIKIVLDQSRELVHVLRSPVINADKKTHILQEVFADTVGDKVMIFLKLIAKKKRSGMLPQIIVEYQKLLDEANGIINVSITSATPMSDDQVKALVAKLSSYTGKTIREKMALNGELLGGVTVKIGDTILDGSVRHQLQLLKKALVSERV</sequence>
<gene>
    <name evidence="1" type="primary">atpH</name>
    <name type="ordered locus">Cpha266_2706</name>
</gene>
<keyword id="KW-0066">ATP synthesis</keyword>
<keyword id="KW-0997">Cell inner membrane</keyword>
<keyword id="KW-1003">Cell membrane</keyword>
<keyword id="KW-0139">CF(1)</keyword>
<keyword id="KW-0375">Hydrogen ion transport</keyword>
<keyword id="KW-0406">Ion transport</keyword>
<keyword id="KW-0472">Membrane</keyword>
<keyword id="KW-1185">Reference proteome</keyword>
<keyword id="KW-0813">Transport</keyword>
<evidence type="ECO:0000255" key="1">
    <source>
        <dbReference type="HAMAP-Rule" id="MF_01416"/>
    </source>
</evidence>
<reference key="1">
    <citation type="submission" date="2006-12" db="EMBL/GenBank/DDBJ databases">
        <title>Complete sequence of Chlorobium phaeobacteroides DSM 266.</title>
        <authorList>
            <consortium name="US DOE Joint Genome Institute"/>
            <person name="Copeland A."/>
            <person name="Lucas S."/>
            <person name="Lapidus A."/>
            <person name="Barry K."/>
            <person name="Detter J.C."/>
            <person name="Glavina del Rio T."/>
            <person name="Hammon N."/>
            <person name="Israni S."/>
            <person name="Pitluck S."/>
            <person name="Goltsman E."/>
            <person name="Schmutz J."/>
            <person name="Larimer F."/>
            <person name="Land M."/>
            <person name="Hauser L."/>
            <person name="Mikhailova N."/>
            <person name="Li T."/>
            <person name="Overmann J."/>
            <person name="Bryant D.A."/>
            <person name="Richardson P."/>
        </authorList>
    </citation>
    <scope>NUCLEOTIDE SEQUENCE [LARGE SCALE GENOMIC DNA]</scope>
    <source>
        <strain>DSM 266 / SMG 266 / 2430</strain>
    </source>
</reference>
<comment type="function">
    <text evidence="1">F(1)F(0) ATP synthase produces ATP from ADP in the presence of a proton or sodium gradient. F-type ATPases consist of two structural domains, F(1) containing the extramembraneous catalytic core and F(0) containing the membrane proton channel, linked together by a central stalk and a peripheral stalk. During catalysis, ATP synthesis in the catalytic domain of F(1) is coupled via a rotary mechanism of the central stalk subunits to proton translocation.</text>
</comment>
<comment type="function">
    <text evidence="1">This protein is part of the stalk that links CF(0) to CF(1). It either transmits conformational changes from CF(0) to CF(1) or is implicated in proton conduction.</text>
</comment>
<comment type="subunit">
    <text evidence="1">F-type ATPases have 2 components, F(1) - the catalytic core - and F(0) - the membrane proton channel. F(1) has five subunits: alpha(3), beta(3), gamma(1), delta(1), epsilon(1). F(0) has three main subunits: a(1), b(2) and c(10-14). The alpha and beta chains form an alternating ring which encloses part of the gamma chain. F(1) is attached to F(0) by a central stalk formed by the gamma and epsilon chains, while a peripheral stalk is formed by the delta and b chains.</text>
</comment>
<comment type="subcellular location">
    <subcellularLocation>
        <location evidence="1">Cell inner membrane</location>
        <topology evidence="1">Peripheral membrane protein</topology>
    </subcellularLocation>
</comment>
<comment type="similarity">
    <text evidence="1">Belongs to the ATPase delta chain family.</text>
</comment>
<dbReference type="EMBL" id="CP000492">
    <property type="protein sequence ID" value="ABL66690.1"/>
    <property type="molecule type" value="Genomic_DNA"/>
</dbReference>
<dbReference type="RefSeq" id="WP_015961217.1">
    <property type="nucleotide sequence ID" value="NC_008639.1"/>
</dbReference>
<dbReference type="SMR" id="A1BJW3"/>
<dbReference type="STRING" id="290317.Cpha266_2706"/>
<dbReference type="KEGG" id="cph:Cpha266_2706"/>
<dbReference type="eggNOG" id="COG0712">
    <property type="taxonomic scope" value="Bacteria"/>
</dbReference>
<dbReference type="HOGENOM" id="CLU_085114_4_0_10"/>
<dbReference type="OrthoDB" id="9802471at2"/>
<dbReference type="Proteomes" id="UP000008701">
    <property type="component" value="Chromosome"/>
</dbReference>
<dbReference type="GO" id="GO:0005886">
    <property type="term" value="C:plasma membrane"/>
    <property type="evidence" value="ECO:0007669"/>
    <property type="project" value="UniProtKB-SubCell"/>
</dbReference>
<dbReference type="GO" id="GO:0045259">
    <property type="term" value="C:proton-transporting ATP synthase complex"/>
    <property type="evidence" value="ECO:0007669"/>
    <property type="project" value="UniProtKB-KW"/>
</dbReference>
<dbReference type="GO" id="GO:0046933">
    <property type="term" value="F:proton-transporting ATP synthase activity, rotational mechanism"/>
    <property type="evidence" value="ECO:0007669"/>
    <property type="project" value="UniProtKB-UniRule"/>
</dbReference>
<dbReference type="Gene3D" id="1.10.520.20">
    <property type="entry name" value="N-terminal domain of the delta subunit of the F1F0-ATP synthase"/>
    <property type="match status" value="1"/>
</dbReference>
<dbReference type="HAMAP" id="MF_01416">
    <property type="entry name" value="ATP_synth_delta_bact"/>
    <property type="match status" value="1"/>
</dbReference>
<dbReference type="InterPro" id="IPR026015">
    <property type="entry name" value="ATP_synth_OSCP/delta_N_sf"/>
</dbReference>
<dbReference type="InterPro" id="IPR000711">
    <property type="entry name" value="ATPase_OSCP/dsu"/>
</dbReference>
<dbReference type="NCBIfam" id="TIGR01145">
    <property type="entry name" value="ATP_synt_delta"/>
    <property type="match status" value="1"/>
</dbReference>
<dbReference type="PANTHER" id="PTHR11910">
    <property type="entry name" value="ATP SYNTHASE DELTA CHAIN"/>
    <property type="match status" value="1"/>
</dbReference>
<dbReference type="Pfam" id="PF00213">
    <property type="entry name" value="OSCP"/>
    <property type="match status" value="1"/>
</dbReference>
<dbReference type="PRINTS" id="PR00125">
    <property type="entry name" value="ATPASEDELTA"/>
</dbReference>
<dbReference type="SUPFAM" id="SSF47928">
    <property type="entry name" value="N-terminal domain of the delta subunit of the F1F0-ATP synthase"/>
    <property type="match status" value="1"/>
</dbReference>
<name>ATPD_CHLPD</name>
<feature type="chain" id="PRO_0000370939" description="ATP synthase subunit delta">
    <location>
        <begin position="1"/>
        <end position="181"/>
    </location>
</feature>